<comment type="function">
    <text>Destroys superoxide anion radicals which are normally produced within the cells and which are toxic to biological systems.</text>
</comment>
<comment type="catalytic activity">
    <reaction>
        <text>2 superoxide + 2 H(+) = H2O2 + O2</text>
        <dbReference type="Rhea" id="RHEA:20696"/>
        <dbReference type="ChEBI" id="CHEBI:15378"/>
        <dbReference type="ChEBI" id="CHEBI:15379"/>
        <dbReference type="ChEBI" id="CHEBI:16240"/>
        <dbReference type="ChEBI" id="CHEBI:18421"/>
        <dbReference type="EC" id="1.15.1.1"/>
    </reaction>
</comment>
<comment type="cofactor">
    <cofactor evidence="1">
        <name>Mn(2+)</name>
        <dbReference type="ChEBI" id="CHEBI:29035"/>
    </cofactor>
    <text evidence="1">Binds 1 Mn(2+) ion per subunit.</text>
</comment>
<comment type="subunit">
    <text evidence="1">Homodimer.</text>
</comment>
<comment type="similarity">
    <text evidence="2">Belongs to the iron/manganese superoxide dismutase family.</text>
</comment>
<gene>
    <name type="primary">sodA</name>
    <name type="synonym">sod</name>
    <name type="ordered locus">lin1478</name>
</gene>
<sequence>MTYELPKLPYTYDALEPNFDKETMELHYTKHHNTYVTKLNEAVSGHPELAEKPVEELVANLDSVPEDIRGAVRNHGGGHANHTLFWSILSPNGGGAPTGDLKSAIESEFGTFDDFKEKFNAAAAARFGSGWAWLVVNNGKLEIVSTANQDSPLSDGKTPVLGLDVWEHAYYLKFQNRRPEYIDTFWNVVNWDEANKRFDAAK</sequence>
<proteinExistence type="inferred from homology"/>
<organism>
    <name type="scientific">Listeria innocua serovar 6a (strain ATCC BAA-680 / CLIP 11262)</name>
    <dbReference type="NCBI Taxonomy" id="272626"/>
    <lineage>
        <taxon>Bacteria</taxon>
        <taxon>Bacillati</taxon>
        <taxon>Bacillota</taxon>
        <taxon>Bacilli</taxon>
        <taxon>Bacillales</taxon>
        <taxon>Listeriaceae</taxon>
        <taxon>Listeria</taxon>
    </lineage>
</organism>
<accession>Q92BR6</accession>
<reference key="1">
    <citation type="journal article" date="2001" name="Science">
        <title>Comparative genomics of Listeria species.</title>
        <authorList>
            <person name="Glaser P."/>
            <person name="Frangeul L."/>
            <person name="Buchrieser C."/>
            <person name="Rusniok C."/>
            <person name="Amend A."/>
            <person name="Baquero F."/>
            <person name="Berche P."/>
            <person name="Bloecker H."/>
            <person name="Brandt P."/>
            <person name="Chakraborty T."/>
            <person name="Charbit A."/>
            <person name="Chetouani F."/>
            <person name="Couve E."/>
            <person name="de Daruvar A."/>
            <person name="Dehoux P."/>
            <person name="Domann E."/>
            <person name="Dominguez-Bernal G."/>
            <person name="Duchaud E."/>
            <person name="Durant L."/>
            <person name="Dussurget O."/>
            <person name="Entian K.-D."/>
            <person name="Fsihi H."/>
            <person name="Garcia-del Portillo F."/>
            <person name="Garrido P."/>
            <person name="Gautier L."/>
            <person name="Goebel W."/>
            <person name="Gomez-Lopez N."/>
            <person name="Hain T."/>
            <person name="Hauf J."/>
            <person name="Jackson D."/>
            <person name="Jones L.-M."/>
            <person name="Kaerst U."/>
            <person name="Kreft J."/>
            <person name="Kuhn M."/>
            <person name="Kunst F."/>
            <person name="Kurapkat G."/>
            <person name="Madueno E."/>
            <person name="Maitournam A."/>
            <person name="Mata Vicente J."/>
            <person name="Ng E."/>
            <person name="Nedjari H."/>
            <person name="Nordsiek G."/>
            <person name="Novella S."/>
            <person name="de Pablos B."/>
            <person name="Perez-Diaz J.-C."/>
            <person name="Purcell R."/>
            <person name="Remmel B."/>
            <person name="Rose M."/>
            <person name="Schlueter T."/>
            <person name="Simoes N."/>
            <person name="Tierrez A."/>
            <person name="Vazquez-Boland J.-A."/>
            <person name="Voss H."/>
            <person name="Wehland J."/>
            <person name="Cossart P."/>
        </authorList>
    </citation>
    <scope>NUCLEOTIDE SEQUENCE [LARGE SCALE GENOMIC DNA]</scope>
    <source>
        <strain>ATCC BAA-680 / CLIP 11262</strain>
    </source>
</reference>
<dbReference type="EC" id="1.15.1.1"/>
<dbReference type="EMBL" id="AL596168">
    <property type="protein sequence ID" value="CAC96709.1"/>
    <property type="molecule type" value="Genomic_DNA"/>
</dbReference>
<dbReference type="PIR" id="AE1617">
    <property type="entry name" value="AE1617"/>
</dbReference>
<dbReference type="RefSeq" id="WP_003762264.1">
    <property type="nucleotide sequence ID" value="NC_003212.1"/>
</dbReference>
<dbReference type="SMR" id="Q92BR6"/>
<dbReference type="STRING" id="272626.gene:17565809"/>
<dbReference type="KEGG" id="lin:sod"/>
<dbReference type="eggNOG" id="COG0605">
    <property type="taxonomic scope" value="Bacteria"/>
</dbReference>
<dbReference type="HOGENOM" id="CLU_031625_0_1_9"/>
<dbReference type="OrthoDB" id="9803125at2"/>
<dbReference type="Proteomes" id="UP000002513">
    <property type="component" value="Chromosome"/>
</dbReference>
<dbReference type="GO" id="GO:0005737">
    <property type="term" value="C:cytoplasm"/>
    <property type="evidence" value="ECO:0007669"/>
    <property type="project" value="TreeGrafter"/>
</dbReference>
<dbReference type="GO" id="GO:0046872">
    <property type="term" value="F:metal ion binding"/>
    <property type="evidence" value="ECO:0007669"/>
    <property type="project" value="UniProtKB-KW"/>
</dbReference>
<dbReference type="GO" id="GO:0004784">
    <property type="term" value="F:superoxide dismutase activity"/>
    <property type="evidence" value="ECO:0007669"/>
    <property type="project" value="UniProtKB-EC"/>
</dbReference>
<dbReference type="FunFam" id="1.10.287.990:FF:000001">
    <property type="entry name" value="Superoxide dismutase"/>
    <property type="match status" value="1"/>
</dbReference>
<dbReference type="FunFam" id="3.55.40.20:FF:000001">
    <property type="entry name" value="Superoxide dismutase"/>
    <property type="match status" value="1"/>
</dbReference>
<dbReference type="Gene3D" id="1.10.287.990">
    <property type="entry name" value="Fe,Mn superoxide dismutase (SOD) domain"/>
    <property type="match status" value="1"/>
</dbReference>
<dbReference type="Gene3D" id="3.55.40.20">
    <property type="entry name" value="Iron/manganese superoxide dismutase, C-terminal domain"/>
    <property type="match status" value="1"/>
</dbReference>
<dbReference type="InterPro" id="IPR001189">
    <property type="entry name" value="Mn/Fe_SOD"/>
</dbReference>
<dbReference type="InterPro" id="IPR019833">
    <property type="entry name" value="Mn/Fe_SOD_BS"/>
</dbReference>
<dbReference type="InterPro" id="IPR019832">
    <property type="entry name" value="Mn/Fe_SOD_C"/>
</dbReference>
<dbReference type="InterPro" id="IPR019831">
    <property type="entry name" value="Mn/Fe_SOD_N"/>
</dbReference>
<dbReference type="InterPro" id="IPR036324">
    <property type="entry name" value="Mn/Fe_SOD_N_sf"/>
</dbReference>
<dbReference type="InterPro" id="IPR036314">
    <property type="entry name" value="SOD_C_sf"/>
</dbReference>
<dbReference type="PANTHER" id="PTHR43595">
    <property type="entry name" value="37S RIBOSOMAL PROTEIN S26, MITOCHONDRIAL"/>
    <property type="match status" value="1"/>
</dbReference>
<dbReference type="PANTHER" id="PTHR43595:SF2">
    <property type="entry name" value="SMALL RIBOSOMAL SUBUNIT PROTEIN MS42"/>
    <property type="match status" value="1"/>
</dbReference>
<dbReference type="Pfam" id="PF02777">
    <property type="entry name" value="Sod_Fe_C"/>
    <property type="match status" value="1"/>
</dbReference>
<dbReference type="Pfam" id="PF00081">
    <property type="entry name" value="Sod_Fe_N"/>
    <property type="match status" value="1"/>
</dbReference>
<dbReference type="PIRSF" id="PIRSF000349">
    <property type="entry name" value="SODismutase"/>
    <property type="match status" value="1"/>
</dbReference>
<dbReference type="PRINTS" id="PR01703">
    <property type="entry name" value="MNSODISMTASE"/>
</dbReference>
<dbReference type="SUPFAM" id="SSF54719">
    <property type="entry name" value="Fe,Mn superoxide dismutase (SOD), C-terminal domain"/>
    <property type="match status" value="1"/>
</dbReference>
<dbReference type="SUPFAM" id="SSF46609">
    <property type="entry name" value="Fe,Mn superoxide dismutase (SOD), N-terminal domain"/>
    <property type="match status" value="1"/>
</dbReference>
<dbReference type="PROSITE" id="PS00088">
    <property type="entry name" value="SOD_MN"/>
    <property type="match status" value="1"/>
</dbReference>
<evidence type="ECO:0000250" key="1"/>
<evidence type="ECO:0000305" key="2"/>
<keyword id="KW-0464">Manganese</keyword>
<keyword id="KW-0479">Metal-binding</keyword>
<keyword id="KW-0560">Oxidoreductase</keyword>
<feature type="chain" id="PRO_0000160042" description="Superoxide dismutase [Mn]">
    <location>
        <begin position="1"/>
        <end position="202"/>
    </location>
</feature>
<feature type="binding site" evidence="1">
    <location>
        <position position="27"/>
    </location>
    <ligand>
        <name>Mn(2+)</name>
        <dbReference type="ChEBI" id="CHEBI:29035"/>
    </ligand>
</feature>
<feature type="binding site" evidence="1">
    <location>
        <position position="82"/>
    </location>
    <ligand>
        <name>Mn(2+)</name>
        <dbReference type="ChEBI" id="CHEBI:29035"/>
    </ligand>
</feature>
<feature type="binding site" evidence="1">
    <location>
        <position position="164"/>
    </location>
    <ligand>
        <name>Mn(2+)</name>
        <dbReference type="ChEBI" id="CHEBI:29035"/>
    </ligand>
</feature>
<feature type="binding site" evidence="1">
    <location>
        <position position="168"/>
    </location>
    <ligand>
        <name>Mn(2+)</name>
        <dbReference type="ChEBI" id="CHEBI:29035"/>
    </ligand>
</feature>
<name>SODM_LISIN</name>
<protein>
    <recommendedName>
        <fullName>Superoxide dismutase [Mn]</fullName>
        <ecNumber>1.15.1.1</ecNumber>
    </recommendedName>
</protein>